<keyword id="KW-0276">Fatty acid metabolism</keyword>
<keyword id="KW-0443">Lipid metabolism</keyword>
<keyword id="KW-0521">NADP</keyword>
<keyword id="KW-0560">Oxidoreductase</keyword>
<keyword id="KW-0576">Peroxisome</keyword>
<keyword id="KW-1185">Reference proteome</keyword>
<sequence>MAEKPQLVNNLPEDVETDECMNKYTHIYSPDLLSDQVAFITGGGSGIGFRIAEVLMRHGCDTVIASRNLEKISQAAKKLTSTTGRRCLPIAMDVRQPETILAAVDETLKTFGRVDILINNAAGNFLCPATSLSFNAFKTVMEIDTMGTFNTSKVIYDKWFKDHGGSIVNISATLGYRGQALQVHAGSAKAANDAMTRHLAVEWGPSGVRVNTVAPGPISGTEGYRRLGGSHAETAGAFHSIPLQRAGNKTEMAHAVLFLASRASSYVTGSVLVADGGAWLTSANDVERLLGIVSSRSAKL</sequence>
<evidence type="ECO:0000250" key="1"/>
<evidence type="ECO:0000250" key="2">
    <source>
        <dbReference type="UniProtKB" id="Q16698"/>
    </source>
</evidence>
<evidence type="ECO:0000250" key="3">
    <source>
        <dbReference type="UniProtKB" id="Q9NUI1"/>
    </source>
</evidence>
<evidence type="ECO:0000255" key="4"/>
<evidence type="ECO:0000305" key="5"/>
<organism>
    <name type="scientific">Danio rerio</name>
    <name type="common">Zebrafish</name>
    <name type="synonym">Brachydanio rerio</name>
    <dbReference type="NCBI Taxonomy" id="7955"/>
    <lineage>
        <taxon>Eukaryota</taxon>
        <taxon>Metazoa</taxon>
        <taxon>Chordata</taxon>
        <taxon>Craniata</taxon>
        <taxon>Vertebrata</taxon>
        <taxon>Euteleostomi</taxon>
        <taxon>Actinopterygii</taxon>
        <taxon>Neopterygii</taxon>
        <taxon>Teleostei</taxon>
        <taxon>Ostariophysi</taxon>
        <taxon>Cypriniformes</taxon>
        <taxon>Danionidae</taxon>
        <taxon>Danioninae</taxon>
        <taxon>Danio</taxon>
    </lineage>
</organism>
<feature type="chain" id="PRO_0000054563" description="Peroxisomal 2,4-dienoyl-CoA reductase [(3E)-enoyl-CoA-producing]">
    <location>
        <begin position="1"/>
        <end position="300"/>
    </location>
</feature>
<feature type="short sequence motif" description="Microbody targeting signal" evidence="4">
    <location>
        <begin position="298"/>
        <end position="300"/>
    </location>
</feature>
<feature type="binding site" evidence="1">
    <location>
        <begin position="42"/>
        <end position="47"/>
    </location>
    <ligand>
        <name>NADP(+)</name>
        <dbReference type="ChEBI" id="CHEBI:58349"/>
    </ligand>
</feature>
<feature type="binding site" evidence="1">
    <location>
        <begin position="67"/>
        <end position="71"/>
    </location>
    <ligand>
        <name>NADP(+)</name>
        <dbReference type="ChEBI" id="CHEBI:58349"/>
    </ligand>
</feature>
<feature type="binding site" evidence="1">
    <location>
        <position position="67"/>
    </location>
    <ligand>
        <name>substrate</name>
    </ligand>
</feature>
<feature type="binding site" evidence="1">
    <location>
        <position position="93"/>
    </location>
    <ligand>
        <name>NADP(+)</name>
        <dbReference type="ChEBI" id="CHEBI:58349"/>
    </ligand>
</feature>
<feature type="binding site" evidence="1">
    <location>
        <position position="95"/>
    </location>
    <ligand>
        <name>substrate</name>
    </ligand>
</feature>
<feature type="binding site" evidence="1">
    <location>
        <position position="125"/>
    </location>
    <ligand>
        <name>substrate</name>
    </ligand>
</feature>
<feature type="binding site" evidence="1">
    <location>
        <begin position="133"/>
        <end position="135"/>
    </location>
    <ligand>
        <name>substrate</name>
    </ligand>
</feature>
<feature type="binding site" evidence="1">
    <location>
        <position position="189"/>
    </location>
    <ligand>
        <name>NADP(+)</name>
        <dbReference type="ChEBI" id="CHEBI:58349"/>
    </ligand>
</feature>
<feature type="binding site" evidence="1">
    <location>
        <begin position="215"/>
        <end position="221"/>
    </location>
    <ligand>
        <name>NADP(+)</name>
        <dbReference type="ChEBI" id="CHEBI:58349"/>
    </ligand>
</feature>
<feature type="binding site" evidence="1">
    <location>
        <position position="226"/>
    </location>
    <ligand>
        <name>substrate</name>
    </ligand>
</feature>
<name>DECR2_DANRE</name>
<comment type="function">
    <text evidence="2">Auxiliary enzyme of beta-oxidation. Participates in the degradation of unsaturated fatty enoyl-CoA esters having double bonds in both even- and odd-numbered positions in peroxisome. Catalyzes the NADP-dependent reduction of 2,4-dienoyl-CoA to yield trans-3-enoyl-CoA (By similarity).</text>
</comment>
<comment type="catalytic activity">
    <reaction evidence="3">
        <text>a (2E,4Z)-dienoyl-CoA + NADPH + H(+) = a 4,5-saturated-(3E)-enoyl-CoA + NADP(+)</text>
        <dbReference type="Rhea" id="RHEA:61892"/>
        <dbReference type="ChEBI" id="CHEBI:15378"/>
        <dbReference type="ChEBI" id="CHEBI:57783"/>
        <dbReference type="ChEBI" id="CHEBI:58349"/>
        <dbReference type="ChEBI" id="CHEBI:85099"/>
        <dbReference type="ChEBI" id="CHEBI:85493"/>
        <dbReference type="EC" id="1.3.1.124"/>
    </reaction>
</comment>
<comment type="catalytic activity">
    <reaction evidence="3">
        <text>a (2E,4E)-dienoyl-CoA + NADPH + H(+) = a 4,5-saturated-(3E)-enoyl-CoA + NADP(+)</text>
        <dbReference type="Rhea" id="RHEA:45912"/>
        <dbReference type="ChEBI" id="CHEBI:15378"/>
        <dbReference type="ChEBI" id="CHEBI:57783"/>
        <dbReference type="ChEBI" id="CHEBI:58349"/>
        <dbReference type="ChEBI" id="CHEBI:85101"/>
        <dbReference type="ChEBI" id="CHEBI:85493"/>
        <dbReference type="EC" id="1.3.1.124"/>
    </reaction>
</comment>
<comment type="catalytic activity">
    <reaction evidence="3">
        <text>(2E,4E)-hexadienoyl-CoA + NADPH + H(+) = (3E)-hexenoyl-CoA + NADP(+)</text>
        <dbReference type="Rhea" id="RHEA:44912"/>
        <dbReference type="ChEBI" id="CHEBI:15378"/>
        <dbReference type="ChEBI" id="CHEBI:57783"/>
        <dbReference type="ChEBI" id="CHEBI:58349"/>
        <dbReference type="ChEBI" id="CHEBI:84788"/>
        <dbReference type="ChEBI" id="CHEBI:84790"/>
    </reaction>
</comment>
<comment type="catalytic activity">
    <reaction evidence="3">
        <text>(2E,4E)-decadienoyl-CoA + NADPH + H(+) = (3E)-decenoyl-CoA + NADP(+)</text>
        <dbReference type="Rhea" id="RHEA:44916"/>
        <dbReference type="ChEBI" id="CHEBI:15378"/>
        <dbReference type="ChEBI" id="CHEBI:57783"/>
        <dbReference type="ChEBI" id="CHEBI:58349"/>
        <dbReference type="ChEBI" id="CHEBI:62244"/>
        <dbReference type="ChEBI" id="CHEBI:84793"/>
    </reaction>
</comment>
<comment type="catalytic activity">
    <reaction evidence="3">
        <text>(2E,4Z,7Z,10Z,13Z,16Z,19Z)-docosaheptaenoyl-CoA + NADPH + H(+) = (3E,7Z,10Z,13Z,16Z,19Z)-docosahexaenoyl-CoA + NADP(+)</text>
        <dbReference type="Rhea" id="RHEA:44920"/>
        <dbReference type="ChEBI" id="CHEBI:15378"/>
        <dbReference type="ChEBI" id="CHEBI:57783"/>
        <dbReference type="ChEBI" id="CHEBI:58349"/>
        <dbReference type="ChEBI" id="CHEBI:77559"/>
        <dbReference type="ChEBI" id="CHEBI:84791"/>
    </reaction>
</comment>
<comment type="subunit">
    <text evidence="3">Monomer, dimer and oligomer.</text>
</comment>
<comment type="subcellular location">
    <subcellularLocation>
        <location evidence="2">Peroxisome</location>
    </subcellularLocation>
</comment>
<comment type="similarity">
    <text evidence="5">Belongs to the short-chain dehydrogenases/reductases (SDR) family. 2,4-dienoyl-CoA reductase subfamily.</text>
</comment>
<protein>
    <recommendedName>
        <fullName>Peroxisomal 2,4-dienoyl-CoA reductase [(3E)-enoyl-CoA-producing]</fullName>
        <ecNumber evidence="2">1.3.1.124</ecNumber>
    </recommendedName>
    <alternativeName>
        <fullName>2,4-dienoyl-CoA reductase 2</fullName>
    </alternativeName>
</protein>
<gene>
    <name type="primary">decr2</name>
    <name type="ORF">si:ch211-153c20.5</name>
    <name type="ORF">zgc:85626</name>
</gene>
<dbReference type="EC" id="1.3.1.124" evidence="2"/>
<dbReference type="EMBL" id="AL772148">
    <property type="protein sequence ID" value="CAE30389.2"/>
    <property type="molecule type" value="Genomic_DNA"/>
</dbReference>
<dbReference type="EMBL" id="BX322798">
    <property type="protein sequence ID" value="CAE30389.2"/>
    <property type="status" value="JOINED"/>
    <property type="molecule type" value="Genomic_DNA"/>
</dbReference>
<dbReference type="EMBL" id="BC068332">
    <property type="protein sequence ID" value="AAH68332.1"/>
    <property type="molecule type" value="mRNA"/>
</dbReference>
<dbReference type="RefSeq" id="NP_998486.1">
    <property type="nucleotide sequence ID" value="NM_213321.1"/>
</dbReference>
<dbReference type="SMR" id="Q6NV34"/>
<dbReference type="FunCoup" id="Q6NV34">
    <property type="interactions" value="602"/>
</dbReference>
<dbReference type="STRING" id="7955.ENSDARP00000066557"/>
<dbReference type="PaxDb" id="7955-ENSDARP00000066557"/>
<dbReference type="Ensembl" id="ENSDART00000066558">
    <property type="protein sequence ID" value="ENSDARP00000066557"/>
    <property type="gene ID" value="ENSDARG00000045257"/>
</dbReference>
<dbReference type="GeneID" id="406623"/>
<dbReference type="KEGG" id="dre:406623"/>
<dbReference type="AGR" id="ZFIN:ZDB-GENE-040426-2612"/>
<dbReference type="CTD" id="26063"/>
<dbReference type="ZFIN" id="ZDB-GENE-040426-2612">
    <property type="gene designation" value="decr2"/>
</dbReference>
<dbReference type="eggNOG" id="KOG0725">
    <property type="taxonomic scope" value="Eukaryota"/>
</dbReference>
<dbReference type="HOGENOM" id="CLU_010194_1_2_1"/>
<dbReference type="InParanoid" id="Q6NV34"/>
<dbReference type="OMA" id="MQAHVCA"/>
<dbReference type="OrthoDB" id="1393670at2759"/>
<dbReference type="PhylomeDB" id="Q6NV34"/>
<dbReference type="TreeFam" id="TF315256"/>
<dbReference type="Reactome" id="R-DRE-390247">
    <property type="pathway name" value="Beta-oxidation of very long chain fatty acids"/>
</dbReference>
<dbReference type="PRO" id="PR:Q6NV34"/>
<dbReference type="Proteomes" id="UP000000437">
    <property type="component" value="Alternate scaffold 24"/>
</dbReference>
<dbReference type="Proteomes" id="UP000000437">
    <property type="component" value="Chromosome 24"/>
</dbReference>
<dbReference type="Bgee" id="ENSDARG00000045257">
    <property type="expression patterns" value="Expressed in liver and 19 other cell types or tissues"/>
</dbReference>
<dbReference type="GO" id="GO:0005777">
    <property type="term" value="C:peroxisome"/>
    <property type="evidence" value="ECO:0000318"/>
    <property type="project" value="GO_Central"/>
</dbReference>
<dbReference type="GO" id="GO:0008670">
    <property type="term" value="F:2,4-dienoyl-CoA reductase (NADPH) activity"/>
    <property type="evidence" value="ECO:0000250"/>
    <property type="project" value="UniProtKB"/>
</dbReference>
<dbReference type="GO" id="GO:0009062">
    <property type="term" value="P:fatty acid catabolic process"/>
    <property type="evidence" value="ECO:0007669"/>
    <property type="project" value="InterPro"/>
</dbReference>
<dbReference type="GO" id="GO:0006631">
    <property type="term" value="P:fatty acid metabolic process"/>
    <property type="evidence" value="ECO:0000318"/>
    <property type="project" value="GO_Central"/>
</dbReference>
<dbReference type="CDD" id="cd05369">
    <property type="entry name" value="TER_DECR_SDR_a"/>
    <property type="match status" value="1"/>
</dbReference>
<dbReference type="FunFam" id="3.40.50.720:FF:000477">
    <property type="entry name" value="Peroxisomal 2,4-dienoyl-CoA reductase"/>
    <property type="match status" value="1"/>
</dbReference>
<dbReference type="Gene3D" id="3.40.50.720">
    <property type="entry name" value="NAD(P)-binding Rossmann-like Domain"/>
    <property type="match status" value="1"/>
</dbReference>
<dbReference type="InterPro" id="IPR045017">
    <property type="entry name" value="DECR2-like"/>
</dbReference>
<dbReference type="InterPro" id="IPR036291">
    <property type="entry name" value="NAD(P)-bd_dom_sf"/>
</dbReference>
<dbReference type="InterPro" id="IPR002347">
    <property type="entry name" value="SDR_fam"/>
</dbReference>
<dbReference type="PANTHER" id="PTHR43296">
    <property type="entry name" value="PEROXISOMAL 2,4-DIENOYL-COA REDUCTASE"/>
    <property type="match status" value="1"/>
</dbReference>
<dbReference type="PANTHER" id="PTHR43296:SF2">
    <property type="entry name" value="PEROXISOMAL 2,4-DIENOYL-COA REDUCTASE [(3E)-ENOYL-COA-PRODUCING]"/>
    <property type="match status" value="1"/>
</dbReference>
<dbReference type="Pfam" id="PF13561">
    <property type="entry name" value="adh_short_C2"/>
    <property type="match status" value="1"/>
</dbReference>
<dbReference type="PRINTS" id="PR00081">
    <property type="entry name" value="GDHRDH"/>
</dbReference>
<dbReference type="PRINTS" id="PR00080">
    <property type="entry name" value="SDRFAMILY"/>
</dbReference>
<dbReference type="SUPFAM" id="SSF51735">
    <property type="entry name" value="NAD(P)-binding Rossmann-fold domains"/>
    <property type="match status" value="1"/>
</dbReference>
<reference key="1">
    <citation type="journal article" date="2013" name="Nature">
        <title>The zebrafish reference genome sequence and its relationship to the human genome.</title>
        <authorList>
            <person name="Howe K."/>
            <person name="Clark M.D."/>
            <person name="Torroja C.F."/>
            <person name="Torrance J."/>
            <person name="Berthelot C."/>
            <person name="Muffato M."/>
            <person name="Collins J.E."/>
            <person name="Humphray S."/>
            <person name="McLaren K."/>
            <person name="Matthews L."/>
            <person name="McLaren S."/>
            <person name="Sealy I."/>
            <person name="Caccamo M."/>
            <person name="Churcher C."/>
            <person name="Scott C."/>
            <person name="Barrett J.C."/>
            <person name="Koch R."/>
            <person name="Rauch G.J."/>
            <person name="White S."/>
            <person name="Chow W."/>
            <person name="Kilian B."/>
            <person name="Quintais L.T."/>
            <person name="Guerra-Assuncao J.A."/>
            <person name="Zhou Y."/>
            <person name="Gu Y."/>
            <person name="Yen J."/>
            <person name="Vogel J.H."/>
            <person name="Eyre T."/>
            <person name="Redmond S."/>
            <person name="Banerjee R."/>
            <person name="Chi J."/>
            <person name="Fu B."/>
            <person name="Langley E."/>
            <person name="Maguire S.F."/>
            <person name="Laird G.K."/>
            <person name="Lloyd D."/>
            <person name="Kenyon E."/>
            <person name="Donaldson S."/>
            <person name="Sehra H."/>
            <person name="Almeida-King J."/>
            <person name="Loveland J."/>
            <person name="Trevanion S."/>
            <person name="Jones M."/>
            <person name="Quail M."/>
            <person name="Willey D."/>
            <person name="Hunt A."/>
            <person name="Burton J."/>
            <person name="Sims S."/>
            <person name="McLay K."/>
            <person name="Plumb B."/>
            <person name="Davis J."/>
            <person name="Clee C."/>
            <person name="Oliver K."/>
            <person name="Clark R."/>
            <person name="Riddle C."/>
            <person name="Elliot D."/>
            <person name="Threadgold G."/>
            <person name="Harden G."/>
            <person name="Ware D."/>
            <person name="Begum S."/>
            <person name="Mortimore B."/>
            <person name="Kerry G."/>
            <person name="Heath P."/>
            <person name="Phillimore B."/>
            <person name="Tracey A."/>
            <person name="Corby N."/>
            <person name="Dunn M."/>
            <person name="Johnson C."/>
            <person name="Wood J."/>
            <person name="Clark S."/>
            <person name="Pelan S."/>
            <person name="Griffiths G."/>
            <person name="Smith M."/>
            <person name="Glithero R."/>
            <person name="Howden P."/>
            <person name="Barker N."/>
            <person name="Lloyd C."/>
            <person name="Stevens C."/>
            <person name="Harley J."/>
            <person name="Holt K."/>
            <person name="Panagiotidis G."/>
            <person name="Lovell J."/>
            <person name="Beasley H."/>
            <person name="Henderson C."/>
            <person name="Gordon D."/>
            <person name="Auger K."/>
            <person name="Wright D."/>
            <person name="Collins J."/>
            <person name="Raisen C."/>
            <person name="Dyer L."/>
            <person name="Leung K."/>
            <person name="Robertson L."/>
            <person name="Ambridge K."/>
            <person name="Leongamornlert D."/>
            <person name="McGuire S."/>
            <person name="Gilderthorp R."/>
            <person name="Griffiths C."/>
            <person name="Manthravadi D."/>
            <person name="Nichol S."/>
            <person name="Barker G."/>
            <person name="Whitehead S."/>
            <person name="Kay M."/>
            <person name="Brown J."/>
            <person name="Murnane C."/>
            <person name="Gray E."/>
            <person name="Humphries M."/>
            <person name="Sycamore N."/>
            <person name="Barker D."/>
            <person name="Saunders D."/>
            <person name="Wallis J."/>
            <person name="Babbage A."/>
            <person name="Hammond S."/>
            <person name="Mashreghi-Mohammadi M."/>
            <person name="Barr L."/>
            <person name="Martin S."/>
            <person name="Wray P."/>
            <person name="Ellington A."/>
            <person name="Matthews N."/>
            <person name="Ellwood M."/>
            <person name="Woodmansey R."/>
            <person name="Clark G."/>
            <person name="Cooper J."/>
            <person name="Tromans A."/>
            <person name="Grafham D."/>
            <person name="Skuce C."/>
            <person name="Pandian R."/>
            <person name="Andrews R."/>
            <person name="Harrison E."/>
            <person name="Kimberley A."/>
            <person name="Garnett J."/>
            <person name="Fosker N."/>
            <person name="Hall R."/>
            <person name="Garner P."/>
            <person name="Kelly D."/>
            <person name="Bird C."/>
            <person name="Palmer S."/>
            <person name="Gehring I."/>
            <person name="Berger A."/>
            <person name="Dooley C.M."/>
            <person name="Ersan-Urun Z."/>
            <person name="Eser C."/>
            <person name="Geiger H."/>
            <person name="Geisler M."/>
            <person name="Karotki L."/>
            <person name="Kirn A."/>
            <person name="Konantz J."/>
            <person name="Konantz M."/>
            <person name="Oberlander M."/>
            <person name="Rudolph-Geiger S."/>
            <person name="Teucke M."/>
            <person name="Lanz C."/>
            <person name="Raddatz G."/>
            <person name="Osoegawa K."/>
            <person name="Zhu B."/>
            <person name="Rapp A."/>
            <person name="Widaa S."/>
            <person name="Langford C."/>
            <person name="Yang F."/>
            <person name="Schuster S.C."/>
            <person name="Carter N.P."/>
            <person name="Harrow J."/>
            <person name="Ning Z."/>
            <person name="Herrero J."/>
            <person name="Searle S.M."/>
            <person name="Enright A."/>
            <person name="Geisler R."/>
            <person name="Plasterk R.H."/>
            <person name="Lee C."/>
            <person name="Westerfield M."/>
            <person name="de Jong P.J."/>
            <person name="Zon L.I."/>
            <person name="Postlethwait J.H."/>
            <person name="Nusslein-Volhard C."/>
            <person name="Hubbard T.J."/>
            <person name="Roest Crollius H."/>
            <person name="Rogers J."/>
            <person name="Stemple D.L."/>
        </authorList>
    </citation>
    <scope>NUCLEOTIDE SEQUENCE [LARGE SCALE GENOMIC DNA]</scope>
    <source>
        <strain>Tuebingen</strain>
    </source>
</reference>
<reference key="2">
    <citation type="submission" date="2004-04" db="EMBL/GenBank/DDBJ databases">
        <authorList>
            <consortium name="NIH - Zebrafish Gene Collection (ZGC) project"/>
        </authorList>
    </citation>
    <scope>NUCLEOTIDE SEQUENCE [LARGE SCALE MRNA]</scope>
    <source>
        <tissue>Kidney</tissue>
    </source>
</reference>
<accession>Q6NV34</accession>
<accession>Q7T004</accession>
<proteinExistence type="evidence at transcript level"/>